<gene>
    <name evidence="1 3" type="primary">fsx1</name>
</gene>
<organism>
    <name type="scientific">Haloplanus natans (strain DSM 17983 / JCM 14081 / CGMCC 1.8972 / RE-101)</name>
    <dbReference type="NCBI Taxonomy" id="926690"/>
    <lineage>
        <taxon>Archaea</taxon>
        <taxon>Methanobacteriati</taxon>
        <taxon>Methanobacteriota</taxon>
        <taxon>Stenosarchaea group</taxon>
        <taxon>Halobacteria</taxon>
        <taxon>Halobacteriales</taxon>
        <taxon>Haloferacaceae</taxon>
        <taxon>Haloplanus</taxon>
    </lineage>
</organism>
<feature type="signal peptide" evidence="1">
    <location>
        <begin position="1"/>
        <end position="24"/>
    </location>
</feature>
<feature type="chain" id="PRO_0000458005" description="Fusexin 1" evidence="1">
    <location>
        <begin position="25"/>
        <end position="653"/>
    </location>
</feature>
<feature type="topological domain" description="Extracellular" evidence="4">
    <location>
        <begin position="25"/>
        <end position="559"/>
    </location>
</feature>
<feature type="transmembrane region" description="Helical" evidence="1">
    <location>
        <begin position="560"/>
        <end position="580"/>
    </location>
</feature>
<feature type="topological domain" description="Cytoplasmic" evidence="4">
    <location>
        <begin position="581"/>
        <end position="604"/>
    </location>
</feature>
<feature type="transmembrane region" description="Helical" evidence="1">
    <location>
        <begin position="605"/>
        <end position="625"/>
    </location>
</feature>
<feature type="transmembrane region" description="Helical" evidence="1">
    <location>
        <begin position="626"/>
        <end position="646"/>
    </location>
</feature>
<feature type="topological domain" description="Cytoplasmic" evidence="4">
    <location>
        <begin position="647"/>
        <end position="653"/>
    </location>
</feature>
<feature type="region of interest" description="Fusion loop" evidence="1">
    <location>
        <begin position="155"/>
        <end position="160"/>
    </location>
</feature>
<feature type="disulfide bond" evidence="1">
    <location>
        <begin position="129"/>
        <end position="167"/>
    </location>
</feature>
<feature type="disulfide bond" evidence="1">
    <location>
        <begin position="398"/>
        <end position="441"/>
    </location>
</feature>
<feature type="disulfide bond" evidence="1">
    <location>
        <begin position="468"/>
        <end position="487"/>
    </location>
</feature>
<feature type="disulfide bond" evidence="1">
    <location>
        <begin position="499"/>
        <end position="516"/>
    </location>
</feature>
<proteinExistence type="inferred from homology"/>
<comment type="function">
    <text evidence="2">Exhibits fusogenic activity (PubMed:35794124). Mediates cell-cell fusion in mammalian cells (bilateral fusion) (PubMed:35794124).</text>
</comment>
<comment type="subunit">
    <text evidence="1">Homotrimer stabilized by interdomain contacts and numerous Ca(2+) and Na(+) ions.</text>
</comment>
<comment type="subcellular location">
    <subcellularLocation>
        <location evidence="1">Cell surface</location>
    </subcellularLocation>
    <subcellularLocation>
        <location evidence="1">Cell membrane</location>
        <topology evidence="1">Multi-pass membrane protein</topology>
    </subcellularLocation>
</comment>
<comment type="domain">
    <text evidence="1">The extracellular N-terminus has 4 domains; the first 3 are structurally similar to fusogens from plants, C.elegans and viruses, while the fourth domain is unique to archaea. Domains I and II are discontinuous. The fusion loop in domain II is stabilized by a Ca(2+) ion so that it protrudes from the molecule.</text>
</comment>
<comment type="similarity">
    <text evidence="1">Belongs to the HAP2/GCS1 family. Fusexin 1 subfamily.</text>
</comment>
<dbReference type="EMBL" id="KE386573">
    <property type="status" value="NOT_ANNOTATED_CDS"/>
    <property type="molecule type" value="Genomic_DNA"/>
</dbReference>
<dbReference type="RefSeq" id="WP_157573584.1">
    <property type="nucleotide sequence ID" value="NZ_KE386573.1"/>
</dbReference>
<dbReference type="SMR" id="P0DW65"/>
<dbReference type="OrthoDB" id="379519at2157"/>
<dbReference type="GO" id="GO:0009986">
    <property type="term" value="C:cell surface"/>
    <property type="evidence" value="ECO:0007669"/>
    <property type="project" value="UniProtKB-SubCell"/>
</dbReference>
<dbReference type="GO" id="GO:0005886">
    <property type="term" value="C:plasma membrane"/>
    <property type="evidence" value="ECO:0007669"/>
    <property type="project" value="UniProtKB-SubCell"/>
</dbReference>
<dbReference type="GO" id="GO:0046872">
    <property type="term" value="F:metal ion binding"/>
    <property type="evidence" value="ECO:0007669"/>
    <property type="project" value="UniProtKB-KW"/>
</dbReference>
<dbReference type="GO" id="GO:0045026">
    <property type="term" value="P:plasma membrane fusion"/>
    <property type="evidence" value="ECO:0000314"/>
    <property type="project" value="UniProtKB"/>
</dbReference>
<dbReference type="HAMAP" id="MF_00869">
    <property type="entry name" value="Fusexin_1"/>
    <property type="match status" value="1"/>
</dbReference>
<dbReference type="InterPro" id="IPR049902">
    <property type="entry name" value="Fsx1"/>
</dbReference>
<accession>P0DW65</accession>
<keyword id="KW-0106">Calcium</keyword>
<keyword id="KW-1003">Cell membrane</keyword>
<keyword id="KW-1015">Disulfide bond</keyword>
<keyword id="KW-0472">Membrane</keyword>
<keyword id="KW-0479">Metal-binding</keyword>
<keyword id="KW-0732">Signal</keyword>
<keyword id="KW-0812">Transmembrane</keyword>
<keyword id="KW-1133">Transmembrane helix</keyword>
<reference key="1">
    <citation type="submission" date="2013-07" db="EMBL/GenBank/DDBJ databases">
        <authorList>
            <person name="Eisen J."/>
            <person name="Huntemann M."/>
            <person name="Han J."/>
            <person name="Chen A."/>
            <person name="Kyrpides N."/>
            <person name="Mavromatis K."/>
            <person name="Markowitz V."/>
            <person name="Palaniappan K."/>
            <person name="Ivanova N."/>
            <person name="Schaumberg A."/>
            <person name="Pati A."/>
            <person name="Liolios K."/>
            <person name="Nordberg H.P."/>
            <person name="Cantor M.N."/>
            <person name="Hua S.X."/>
            <person name="Woyke T."/>
        </authorList>
    </citation>
    <scope>NUCLEOTIDE SEQUENCE [LARGE SCALE GENOMIC DNA]</scope>
</reference>
<reference key="2">
    <citation type="journal article" date="2022" name="Nat. Commun.">
        <title>Discovery of archaeal fusexins homologous to eukaryotic HAP2/GCS1 gamete fusion proteins.</title>
        <authorList>
            <person name="Moi D."/>
            <person name="Nishio S."/>
            <person name="Li X."/>
            <person name="Valansi C."/>
            <person name="Langleib M."/>
            <person name="Brukman N.G."/>
            <person name="Flyak K."/>
            <person name="Dessimoz C."/>
            <person name="de Sanctis D."/>
            <person name="Tunyasuvunakool K."/>
            <person name="Jumper J."/>
            <person name="Grana M."/>
            <person name="Romero H."/>
            <person name="Aguilar P.S."/>
            <person name="Jovine L."/>
            <person name="Podbilewicz B."/>
        </authorList>
    </citation>
    <scope>FUNCTION</scope>
</reference>
<name>FSX1_HALSH</name>
<evidence type="ECO:0000255" key="1">
    <source>
        <dbReference type="HAMAP-Rule" id="MF_00869"/>
    </source>
</evidence>
<evidence type="ECO:0000269" key="2">
    <source>
    </source>
</evidence>
<evidence type="ECO:0000303" key="3">
    <source>
    </source>
</evidence>
<evidence type="ECO:0000305" key="4"/>
<sequence>MKRVGNCWKASVAAFFLLMFTAFAAADTTSVDTVSYKSNSEFFDGEVLQAGYVSNFATDKINVHLGASEIESKTGATAEEDLTLSVSHQNTYARYPLQETGLKKIYGWEGMKKTFDTKDQLWNWVTSNCADFTEGGVAIGDRTSKVEAAAKSWYDYWTGSYNYQAFCLRKNGYYGDVADIGSPDEIFRTEWRLQAGDKNPQTAIITNGDGGSGVVSNLGRYAKVKWQGNLDTGQNPPLVDDELAIHGNNYEGGWRVISEQRYDNYWNYIKNDGNRLLDKWKSGDYSESYIEGLLNGKAENAQKRYSESPLANAEVLDSSFQSGALKADMDSRLAYPEFNVYVDAGENGYITVSKPVGKPKIVSSSGASFGELSSGRISVDVKNVGGAEGSFSARAGSCSQYFQADALQNTKRVAPGETASYSFRVTFTSTSMQQASYTGRCSITVEDTGSGREVSTSVSVEATQQSECTQGKEIVKQKNGNDVIYSCPDGLKIQKQDTCTGELKAVFVNNDIQYDCREEGTGGGSGGGLFGKRFTLPITGTQLSNPLNAFENIWSGDANALNWLQVFVTFIAFLGGFALVGVKLGKIVDGLATEFIPVKDSHVRLVIGLLGGGMIATAVYQLVTDPLGLLVTVLGLVVMGYLYLSASAPEINL</sequence>
<protein>
    <recommendedName>
        <fullName evidence="1 3">Fusexin 1</fullName>
        <shortName evidence="3">HnFsx1</shortName>
    </recommendedName>
</protein>